<organism>
    <name type="scientific">Vaccinia virus (strain Copenhagen)</name>
    <name type="common">VACV</name>
    <dbReference type="NCBI Taxonomy" id="10249"/>
    <lineage>
        <taxon>Viruses</taxon>
        <taxon>Varidnaviria</taxon>
        <taxon>Bamfordvirae</taxon>
        <taxon>Nucleocytoviricota</taxon>
        <taxon>Pokkesviricetes</taxon>
        <taxon>Chitovirales</taxon>
        <taxon>Poxviridae</taxon>
        <taxon>Chordopoxvirinae</taxon>
        <taxon>Orthopoxvirus</taxon>
        <taxon>Vaccinia virus</taxon>
    </lineage>
</organism>
<protein>
    <recommendedName>
        <fullName>Protein OPG049</fullName>
    </recommendedName>
    <alternativeName>
        <fullName>36 kDa major membrane protein F5</fullName>
    </alternativeName>
</protein>
<organismHost>
    <name type="scientific">Homo sapiens</name>
    <name type="common">Human</name>
    <dbReference type="NCBI Taxonomy" id="9606"/>
</organismHost>
<evidence type="ECO:0000250" key="1">
    <source>
        <dbReference type="UniProtKB" id="P24358"/>
    </source>
</evidence>
<evidence type="ECO:0000255" key="2"/>
<evidence type="ECO:0000305" key="3"/>
<name>PG049_VACCC</name>
<comment type="function">
    <text evidence="1">Plays a role in the spread of virus to neighboring cells ex vivo.</text>
</comment>
<comment type="subcellular location">
    <subcellularLocation>
        <location evidence="1">Host cell membrane</location>
        <topology evidence="1">Single-pass membrane protein</topology>
    </subcellularLocation>
    <text evidence="1">May localize at the surface of cytoplasmic extensions at the periphery of the cell.</text>
</comment>
<comment type="induction">
    <text evidence="1">Expressed in the early phase of the viral replicative cycle.</text>
</comment>
<comment type="similarity">
    <text evidence="3">Belongs to the orthopoxvirus OPG049 family.</text>
</comment>
<feature type="signal peptide" evidence="2">
    <location>
        <begin position="1"/>
        <end position="20"/>
    </location>
</feature>
<feature type="chain" id="PRO_0000040614" description="Protein OPG049">
    <location>
        <begin position="21"/>
        <end position="321"/>
    </location>
</feature>
<feature type="transmembrane region" description="Helical" evidence="2">
    <location>
        <begin position="286"/>
        <end position="306"/>
    </location>
</feature>
<feature type="glycosylation site" description="N-linked (GlcNAc...) asparagine; by host" evidence="2">
    <location>
        <position position="41"/>
    </location>
</feature>
<feature type="glycosylation site" description="N-linked (GlcNAc...) asparagine; by host" evidence="2">
    <location>
        <position position="72"/>
    </location>
</feature>
<feature type="glycosylation site" description="N-linked (GlcNAc...) asparagine; by host" evidence="2">
    <location>
        <position position="79"/>
    </location>
</feature>
<feature type="glycosylation site" description="N-linked (GlcNAc...) asparagine; by host" evidence="2">
    <location>
        <position position="108"/>
    </location>
</feature>
<feature type="glycosylation site" description="N-linked (GlcNAc...) asparagine; by host" evidence="2">
    <location>
        <position position="144"/>
    </location>
</feature>
<feature type="glycosylation site" description="N-linked (GlcNAc...) asparagine; by host" evidence="2">
    <location>
        <position position="220"/>
    </location>
</feature>
<feature type="glycosylation site" description="N-linked (GlcNAc...) asparagine; by host" evidence="2">
    <location>
        <position position="245"/>
    </location>
</feature>
<dbReference type="EMBL" id="M35027">
    <property type="protein sequence ID" value="AAA48021.1"/>
    <property type="molecule type" value="Genomic_DNA"/>
</dbReference>
<dbReference type="PIR" id="A42507">
    <property type="entry name" value="A42507"/>
</dbReference>
<dbReference type="SMR" id="P21014"/>
<dbReference type="Proteomes" id="UP000008269">
    <property type="component" value="Segment"/>
</dbReference>
<dbReference type="GO" id="GO:0020002">
    <property type="term" value="C:host cell plasma membrane"/>
    <property type="evidence" value="ECO:0007669"/>
    <property type="project" value="UniProtKB-SubCell"/>
</dbReference>
<dbReference type="GO" id="GO:0016020">
    <property type="term" value="C:membrane"/>
    <property type="evidence" value="ECO:0007669"/>
    <property type="project" value="UniProtKB-KW"/>
</dbReference>
<dbReference type="GO" id="GO:0016032">
    <property type="term" value="P:viral process"/>
    <property type="evidence" value="ECO:0007669"/>
    <property type="project" value="InterPro"/>
</dbReference>
<dbReference type="Gene3D" id="2.60.40.10">
    <property type="entry name" value="Immunoglobulins"/>
    <property type="match status" value="1"/>
</dbReference>
<dbReference type="InterPro" id="IPR036179">
    <property type="entry name" value="Ig-like_dom_sf"/>
</dbReference>
<dbReference type="InterPro" id="IPR013783">
    <property type="entry name" value="Ig-like_fold"/>
</dbReference>
<dbReference type="InterPro" id="IPR007674">
    <property type="entry name" value="Poxvirus_F5/I6_dom"/>
</dbReference>
<dbReference type="Pfam" id="PF04595">
    <property type="entry name" value="Pox_I6"/>
    <property type="match status" value="1"/>
</dbReference>
<dbReference type="SUPFAM" id="SSF48726">
    <property type="entry name" value="Immunoglobulin"/>
    <property type="match status" value="1"/>
</dbReference>
<keyword id="KW-0325">Glycoprotein</keyword>
<keyword id="KW-1032">Host cell membrane</keyword>
<keyword id="KW-1043">Host membrane</keyword>
<keyword id="KW-0472">Membrane</keyword>
<keyword id="KW-1185">Reference proteome</keyword>
<keyword id="KW-0732">Signal</keyword>
<keyword id="KW-0812">Transmembrane</keyword>
<keyword id="KW-1133">Transmembrane helix</keyword>
<accession>P21014</accession>
<proteinExistence type="inferred from homology"/>
<sequence length="321" mass="36479">MGTNVVRVFVILYLLAVCGCIEYDVDDNVHICTHTDVSHINHTSWYYNDKVIALATEDKTSGYISSFIKRVNISLTCLNISSLRYEDSGTYKGVSHLKDGVIVTTTMNISVKANIIDLTGRVRYLTRNYCEVKIRCEITSFALNGSTTPPHMILGTVDKWKYLPFPTDDYRYVGELKRYISGNPYPTESLALEISSTFNRFTIVKNLNDDEFSCYLFSQNYSFHKMLNARHICESEWKALNNNDNASSMPASHNNLANDLSSMMSQLQNDNDDNNDYSAPMNVDNLIMIVLITMLSIILVIIVVIAAISMYKKSKYRHIDN</sequence>
<reference key="1">
    <citation type="journal article" date="1990" name="Virology">
        <title>The complete DNA sequence of vaccinia virus.</title>
        <authorList>
            <person name="Goebel S.J."/>
            <person name="Johnson G.P."/>
            <person name="Perkus M.E."/>
            <person name="Davis S.W."/>
            <person name="Winslow J.P."/>
            <person name="Paoletti E."/>
        </authorList>
    </citation>
    <scope>NUCLEOTIDE SEQUENCE [LARGE SCALE GENOMIC DNA]</scope>
</reference>
<reference key="2">
    <citation type="journal article" date="1990" name="Virology">
        <title>Appendix to 'The complete DNA sequence of vaccinia virus'.</title>
        <authorList>
            <person name="Goebel S.J."/>
            <person name="Johnson G.P."/>
            <person name="Perkus M.E."/>
            <person name="Davis S.W."/>
            <person name="Winslow J.P."/>
            <person name="Paoletti E."/>
        </authorList>
    </citation>
    <scope>NUCLEOTIDE SEQUENCE [LARGE SCALE GENOMIC DNA]</scope>
</reference>
<gene>
    <name type="primary">OPG049</name>
    <name type="ORF">F5L</name>
</gene>